<organism>
    <name type="scientific">Pseudomonas aeruginosa (strain ATCC 15692 / DSM 22644 / CIP 104116 / JCM 14847 / LMG 12228 / 1C / PRS 101 / PAO1)</name>
    <dbReference type="NCBI Taxonomy" id="208964"/>
    <lineage>
        <taxon>Bacteria</taxon>
        <taxon>Pseudomonadati</taxon>
        <taxon>Pseudomonadota</taxon>
        <taxon>Gammaproteobacteria</taxon>
        <taxon>Pseudomonadales</taxon>
        <taxon>Pseudomonadaceae</taxon>
        <taxon>Pseudomonas</taxon>
    </lineage>
</organism>
<accession>Q9HT20</accession>
<keyword id="KW-0066">ATP synthesis</keyword>
<keyword id="KW-0067">ATP-binding</keyword>
<keyword id="KW-0997">Cell inner membrane</keyword>
<keyword id="KW-1003">Cell membrane</keyword>
<keyword id="KW-0139">CF(1)</keyword>
<keyword id="KW-0375">Hydrogen ion transport</keyword>
<keyword id="KW-0406">Ion transport</keyword>
<keyword id="KW-0472">Membrane</keyword>
<keyword id="KW-0547">Nucleotide-binding</keyword>
<keyword id="KW-1185">Reference proteome</keyword>
<keyword id="KW-1278">Translocase</keyword>
<keyword id="KW-0813">Transport</keyword>
<comment type="function">
    <text evidence="1">Produces ATP from ADP in the presence of a proton gradient across the membrane. The catalytic sites are hosted primarily by the beta subunits.</text>
</comment>
<comment type="catalytic activity">
    <reaction evidence="1">
        <text>ATP + H2O + 4 H(+)(in) = ADP + phosphate + 5 H(+)(out)</text>
        <dbReference type="Rhea" id="RHEA:57720"/>
        <dbReference type="ChEBI" id="CHEBI:15377"/>
        <dbReference type="ChEBI" id="CHEBI:15378"/>
        <dbReference type="ChEBI" id="CHEBI:30616"/>
        <dbReference type="ChEBI" id="CHEBI:43474"/>
        <dbReference type="ChEBI" id="CHEBI:456216"/>
        <dbReference type="EC" id="7.1.2.2"/>
    </reaction>
</comment>
<comment type="subunit">
    <text evidence="1">F-type ATPases have 2 components, CF(1) - the catalytic core - and CF(0) - the membrane proton channel. CF(1) has five subunits: alpha(3), beta(3), gamma(1), delta(1), epsilon(1). CF(0) has three main subunits: a(1), b(2) and c(9-12). The alpha and beta chains form an alternating ring which encloses part of the gamma chain. CF(1) is attached to CF(0) by a central stalk formed by the gamma and epsilon chains, while a peripheral stalk is formed by the delta and b chains.</text>
</comment>
<comment type="subcellular location">
    <subcellularLocation>
        <location evidence="1">Cell inner membrane</location>
        <topology evidence="1">Peripheral membrane protein</topology>
    </subcellularLocation>
</comment>
<comment type="similarity">
    <text evidence="1">Belongs to the ATPase alpha/beta chains family.</text>
</comment>
<reference key="1">
    <citation type="journal article" date="2000" name="Nature">
        <title>Complete genome sequence of Pseudomonas aeruginosa PAO1, an opportunistic pathogen.</title>
        <authorList>
            <person name="Stover C.K."/>
            <person name="Pham X.-Q.T."/>
            <person name="Erwin A.L."/>
            <person name="Mizoguchi S.D."/>
            <person name="Warrener P."/>
            <person name="Hickey M.J."/>
            <person name="Brinkman F.S.L."/>
            <person name="Hufnagle W.O."/>
            <person name="Kowalik D.J."/>
            <person name="Lagrou M."/>
            <person name="Garber R.L."/>
            <person name="Goltry L."/>
            <person name="Tolentino E."/>
            <person name="Westbrock-Wadman S."/>
            <person name="Yuan Y."/>
            <person name="Brody L.L."/>
            <person name="Coulter S.N."/>
            <person name="Folger K.R."/>
            <person name="Kas A."/>
            <person name="Larbig K."/>
            <person name="Lim R.M."/>
            <person name="Smith K.A."/>
            <person name="Spencer D.H."/>
            <person name="Wong G.K.-S."/>
            <person name="Wu Z."/>
            <person name="Paulsen I.T."/>
            <person name="Reizer J."/>
            <person name="Saier M.H. Jr."/>
            <person name="Hancock R.E.W."/>
            <person name="Lory S."/>
            <person name="Olson M.V."/>
        </authorList>
    </citation>
    <scope>NUCLEOTIDE SEQUENCE [LARGE SCALE GENOMIC DNA]</scope>
    <source>
        <strain>ATCC 15692 / DSM 22644 / CIP 104116 / JCM 14847 / LMG 12228 / 1C / PRS 101 / PAO1</strain>
    </source>
</reference>
<proteinExistence type="inferred from homology"/>
<feature type="chain" id="PRO_0000254338" description="ATP synthase subunit beta">
    <location>
        <begin position="1"/>
        <end position="458"/>
    </location>
</feature>
<feature type="binding site" evidence="1">
    <location>
        <begin position="148"/>
        <end position="155"/>
    </location>
    <ligand>
        <name>ATP</name>
        <dbReference type="ChEBI" id="CHEBI:30616"/>
    </ligand>
</feature>
<evidence type="ECO:0000255" key="1">
    <source>
        <dbReference type="HAMAP-Rule" id="MF_01347"/>
    </source>
</evidence>
<protein>
    <recommendedName>
        <fullName evidence="1">ATP synthase subunit beta</fullName>
        <ecNumber evidence="1">7.1.2.2</ecNumber>
    </recommendedName>
    <alternativeName>
        <fullName evidence="1">ATP synthase F1 sector subunit beta</fullName>
    </alternativeName>
    <alternativeName>
        <fullName evidence="1">F-ATPase subunit beta</fullName>
    </alternativeName>
</protein>
<name>ATPB_PSEAE</name>
<gene>
    <name evidence="1" type="primary">atpD</name>
    <name type="ordered locus">PA5554</name>
</gene>
<dbReference type="EC" id="7.1.2.2" evidence="1"/>
<dbReference type="EMBL" id="AE004091">
    <property type="protein sequence ID" value="AAG08939.1"/>
    <property type="molecule type" value="Genomic_DNA"/>
</dbReference>
<dbReference type="PIR" id="C82952">
    <property type="entry name" value="C82952"/>
</dbReference>
<dbReference type="RefSeq" id="NP_254241.1">
    <property type="nucleotide sequence ID" value="NC_002516.2"/>
</dbReference>
<dbReference type="RefSeq" id="WP_003097130.1">
    <property type="nucleotide sequence ID" value="NZ_QZGE01000012.1"/>
</dbReference>
<dbReference type="SMR" id="Q9HT20"/>
<dbReference type="FunCoup" id="Q9HT20">
    <property type="interactions" value="573"/>
</dbReference>
<dbReference type="STRING" id="208964.PA5554"/>
<dbReference type="PaxDb" id="208964-PA5554"/>
<dbReference type="GeneID" id="77224107"/>
<dbReference type="GeneID" id="878083"/>
<dbReference type="KEGG" id="pae:PA5554"/>
<dbReference type="PATRIC" id="fig|208964.12.peg.5820"/>
<dbReference type="PseudoCAP" id="PA5554"/>
<dbReference type="HOGENOM" id="CLU_022398_0_2_6"/>
<dbReference type="InParanoid" id="Q9HT20"/>
<dbReference type="OrthoDB" id="9801639at2"/>
<dbReference type="PhylomeDB" id="Q9HT20"/>
<dbReference type="BioCyc" id="PAER208964:G1FZ6-5681-MONOMER"/>
<dbReference type="Proteomes" id="UP000002438">
    <property type="component" value="Chromosome"/>
</dbReference>
<dbReference type="GO" id="GO:0005886">
    <property type="term" value="C:plasma membrane"/>
    <property type="evidence" value="ECO:0007669"/>
    <property type="project" value="UniProtKB-SubCell"/>
</dbReference>
<dbReference type="GO" id="GO:0045259">
    <property type="term" value="C:proton-transporting ATP synthase complex"/>
    <property type="evidence" value="ECO:0007669"/>
    <property type="project" value="UniProtKB-KW"/>
</dbReference>
<dbReference type="GO" id="GO:0005524">
    <property type="term" value="F:ATP binding"/>
    <property type="evidence" value="ECO:0007669"/>
    <property type="project" value="UniProtKB-UniRule"/>
</dbReference>
<dbReference type="GO" id="GO:0016887">
    <property type="term" value="F:ATP hydrolysis activity"/>
    <property type="evidence" value="ECO:0007669"/>
    <property type="project" value="InterPro"/>
</dbReference>
<dbReference type="GO" id="GO:0046933">
    <property type="term" value="F:proton-transporting ATP synthase activity, rotational mechanism"/>
    <property type="evidence" value="ECO:0007669"/>
    <property type="project" value="UniProtKB-UniRule"/>
</dbReference>
<dbReference type="CDD" id="cd18110">
    <property type="entry name" value="ATP-synt_F1_beta_C"/>
    <property type="match status" value="1"/>
</dbReference>
<dbReference type="CDD" id="cd18115">
    <property type="entry name" value="ATP-synt_F1_beta_N"/>
    <property type="match status" value="1"/>
</dbReference>
<dbReference type="CDD" id="cd01133">
    <property type="entry name" value="F1-ATPase_beta_CD"/>
    <property type="match status" value="1"/>
</dbReference>
<dbReference type="FunFam" id="1.10.1140.10:FF:000001">
    <property type="entry name" value="ATP synthase subunit beta"/>
    <property type="match status" value="1"/>
</dbReference>
<dbReference type="FunFam" id="3.40.50.300:FF:000004">
    <property type="entry name" value="ATP synthase subunit beta"/>
    <property type="match status" value="1"/>
</dbReference>
<dbReference type="Gene3D" id="2.40.10.170">
    <property type="match status" value="1"/>
</dbReference>
<dbReference type="Gene3D" id="1.10.1140.10">
    <property type="entry name" value="Bovine Mitochondrial F1-atpase, Atp Synthase Beta Chain, Chain D, domain 3"/>
    <property type="match status" value="1"/>
</dbReference>
<dbReference type="Gene3D" id="3.40.50.300">
    <property type="entry name" value="P-loop containing nucleotide triphosphate hydrolases"/>
    <property type="match status" value="1"/>
</dbReference>
<dbReference type="HAMAP" id="MF_01347">
    <property type="entry name" value="ATP_synth_beta_bact"/>
    <property type="match status" value="1"/>
</dbReference>
<dbReference type="InterPro" id="IPR003593">
    <property type="entry name" value="AAA+_ATPase"/>
</dbReference>
<dbReference type="InterPro" id="IPR055190">
    <property type="entry name" value="ATP-synt_VA_C"/>
</dbReference>
<dbReference type="InterPro" id="IPR005722">
    <property type="entry name" value="ATP_synth_F1_bsu"/>
</dbReference>
<dbReference type="InterPro" id="IPR020003">
    <property type="entry name" value="ATPase_a/bsu_AS"/>
</dbReference>
<dbReference type="InterPro" id="IPR050053">
    <property type="entry name" value="ATPase_alpha/beta_chains"/>
</dbReference>
<dbReference type="InterPro" id="IPR004100">
    <property type="entry name" value="ATPase_F1/V1/A1_a/bsu_N"/>
</dbReference>
<dbReference type="InterPro" id="IPR036121">
    <property type="entry name" value="ATPase_F1/V1/A1_a/bsu_N_sf"/>
</dbReference>
<dbReference type="InterPro" id="IPR000194">
    <property type="entry name" value="ATPase_F1/V1/A1_a/bsu_nucl-bd"/>
</dbReference>
<dbReference type="InterPro" id="IPR024034">
    <property type="entry name" value="ATPase_F1/V1_b/a_C"/>
</dbReference>
<dbReference type="InterPro" id="IPR027417">
    <property type="entry name" value="P-loop_NTPase"/>
</dbReference>
<dbReference type="NCBIfam" id="TIGR01039">
    <property type="entry name" value="atpD"/>
    <property type="match status" value="1"/>
</dbReference>
<dbReference type="PANTHER" id="PTHR15184">
    <property type="entry name" value="ATP SYNTHASE"/>
    <property type="match status" value="1"/>
</dbReference>
<dbReference type="PANTHER" id="PTHR15184:SF71">
    <property type="entry name" value="ATP SYNTHASE SUBUNIT BETA, MITOCHONDRIAL"/>
    <property type="match status" value="1"/>
</dbReference>
<dbReference type="Pfam" id="PF00006">
    <property type="entry name" value="ATP-synt_ab"/>
    <property type="match status" value="1"/>
</dbReference>
<dbReference type="Pfam" id="PF02874">
    <property type="entry name" value="ATP-synt_ab_N"/>
    <property type="match status" value="1"/>
</dbReference>
<dbReference type="Pfam" id="PF22919">
    <property type="entry name" value="ATP-synt_VA_C"/>
    <property type="match status" value="1"/>
</dbReference>
<dbReference type="SMART" id="SM00382">
    <property type="entry name" value="AAA"/>
    <property type="match status" value="1"/>
</dbReference>
<dbReference type="SUPFAM" id="SSF47917">
    <property type="entry name" value="C-terminal domain of alpha and beta subunits of F1 ATP synthase"/>
    <property type="match status" value="1"/>
</dbReference>
<dbReference type="SUPFAM" id="SSF50615">
    <property type="entry name" value="N-terminal domain of alpha and beta subunits of F1 ATP synthase"/>
    <property type="match status" value="1"/>
</dbReference>
<dbReference type="SUPFAM" id="SSF52540">
    <property type="entry name" value="P-loop containing nucleoside triphosphate hydrolases"/>
    <property type="match status" value="1"/>
</dbReference>
<dbReference type="PROSITE" id="PS00152">
    <property type="entry name" value="ATPASE_ALPHA_BETA"/>
    <property type="match status" value="1"/>
</dbReference>
<sequence length="458" mass="49499">MSSGRIVQIIGAVIDVEFPRDAVPSIYEALKVQGVETTLEVQQQLGDGVVRSIAMGSTEGLKRGLNVDSTGAAISVPVGKATLGRIMDVLGNPIDEAGPIGEEERWGIHREAPSYADQAGGNELLETGIKVIDLVCPFAKGGKVGLFGGAGVGKTVNMMELIRNIAIEHSGYSVFAGVGERTREGNDFYHEMKDSNVLDKVALVYGQMNEPPGNRLRVALTGLTMAEKFRDEGRDVLLFIDNIYRYTLAGTEVSALLGRMPSAVGYQPTLAEEMGVLQERITSTKKGSITSIQAVYVPADDLTDPSPATTFAHLDATVVLSRDIASLGIYPAVDPLDSTSRQLDPLVIGQDHYDTARGVQYVLQRYKELKDIIAILGMDELSEADKLLVARARKIQRFLSQPFFVAEVFTGSPGKYVSLKDTIAGFKGILNGDYDHLPEQAFYMVGGIEEAVEKAKKL</sequence>